<organism>
    <name type="scientific">Sorangium cellulosum (strain So ce56)</name>
    <name type="common">Polyangium cellulosum (strain So ce56)</name>
    <dbReference type="NCBI Taxonomy" id="448385"/>
    <lineage>
        <taxon>Bacteria</taxon>
        <taxon>Pseudomonadati</taxon>
        <taxon>Myxococcota</taxon>
        <taxon>Polyangia</taxon>
        <taxon>Polyangiales</taxon>
        <taxon>Polyangiaceae</taxon>
        <taxon>Sorangium</taxon>
    </lineage>
</organism>
<keyword id="KW-0963">Cytoplasm</keyword>
<keyword id="KW-0460">Magnesium</keyword>
<keyword id="KW-0479">Metal-binding</keyword>
<keyword id="KW-0548">Nucleotidyltransferase</keyword>
<keyword id="KW-1185">Reference proteome</keyword>
<keyword id="KW-0694">RNA-binding</keyword>
<keyword id="KW-0808">Transferase</keyword>
<gene>
    <name evidence="1" type="primary">pnp</name>
    <name type="ordered locus">sce4541</name>
</gene>
<evidence type="ECO:0000255" key="1">
    <source>
        <dbReference type="HAMAP-Rule" id="MF_01595"/>
    </source>
</evidence>
<evidence type="ECO:0000256" key="2">
    <source>
        <dbReference type="SAM" id="MobiDB-lite"/>
    </source>
</evidence>
<proteinExistence type="inferred from homology"/>
<reference key="1">
    <citation type="journal article" date="2007" name="Nat. Biotechnol.">
        <title>Complete genome sequence of the myxobacterium Sorangium cellulosum.</title>
        <authorList>
            <person name="Schneiker S."/>
            <person name="Perlova O."/>
            <person name="Kaiser O."/>
            <person name="Gerth K."/>
            <person name="Alici A."/>
            <person name="Altmeyer M.O."/>
            <person name="Bartels D."/>
            <person name="Bekel T."/>
            <person name="Beyer S."/>
            <person name="Bode E."/>
            <person name="Bode H.B."/>
            <person name="Bolten C.J."/>
            <person name="Choudhuri J.V."/>
            <person name="Doss S."/>
            <person name="Elnakady Y.A."/>
            <person name="Frank B."/>
            <person name="Gaigalat L."/>
            <person name="Goesmann A."/>
            <person name="Groeger C."/>
            <person name="Gross F."/>
            <person name="Jelsbak L."/>
            <person name="Jelsbak L."/>
            <person name="Kalinowski J."/>
            <person name="Kegler C."/>
            <person name="Knauber T."/>
            <person name="Konietzny S."/>
            <person name="Kopp M."/>
            <person name="Krause L."/>
            <person name="Krug D."/>
            <person name="Linke B."/>
            <person name="Mahmud T."/>
            <person name="Martinez-Arias R."/>
            <person name="McHardy A.C."/>
            <person name="Merai M."/>
            <person name="Meyer F."/>
            <person name="Mormann S."/>
            <person name="Munoz-Dorado J."/>
            <person name="Perez J."/>
            <person name="Pradella S."/>
            <person name="Rachid S."/>
            <person name="Raddatz G."/>
            <person name="Rosenau F."/>
            <person name="Rueckert C."/>
            <person name="Sasse F."/>
            <person name="Scharfe M."/>
            <person name="Schuster S.C."/>
            <person name="Suen G."/>
            <person name="Treuner-Lange A."/>
            <person name="Velicer G.J."/>
            <person name="Vorholter F.-J."/>
            <person name="Weissman K.J."/>
            <person name="Welch R.D."/>
            <person name="Wenzel S.C."/>
            <person name="Whitworth D.E."/>
            <person name="Wilhelm S."/>
            <person name="Wittmann C."/>
            <person name="Bloecker H."/>
            <person name="Puehler A."/>
            <person name="Mueller R."/>
        </authorList>
    </citation>
    <scope>NUCLEOTIDE SEQUENCE [LARGE SCALE GENOMIC DNA]</scope>
    <source>
        <strain>So ce56</strain>
    </source>
</reference>
<name>PNP_SORC5</name>
<comment type="function">
    <text evidence="1">Involved in mRNA degradation. Catalyzes the phosphorolysis of single-stranded polyribonucleotides processively in the 3'- to 5'-direction.</text>
</comment>
<comment type="catalytic activity">
    <reaction evidence="1">
        <text>RNA(n+1) + phosphate = RNA(n) + a ribonucleoside 5'-diphosphate</text>
        <dbReference type="Rhea" id="RHEA:22096"/>
        <dbReference type="Rhea" id="RHEA-COMP:14527"/>
        <dbReference type="Rhea" id="RHEA-COMP:17342"/>
        <dbReference type="ChEBI" id="CHEBI:43474"/>
        <dbReference type="ChEBI" id="CHEBI:57930"/>
        <dbReference type="ChEBI" id="CHEBI:140395"/>
        <dbReference type="EC" id="2.7.7.8"/>
    </reaction>
</comment>
<comment type="cofactor">
    <cofactor evidence="1">
        <name>Mg(2+)</name>
        <dbReference type="ChEBI" id="CHEBI:18420"/>
    </cofactor>
</comment>
<comment type="subcellular location">
    <subcellularLocation>
        <location evidence="1">Cytoplasm</location>
    </subcellularLocation>
</comment>
<comment type="similarity">
    <text evidence="1">Belongs to the polyribonucleotide nucleotidyltransferase family.</text>
</comment>
<accession>A9F8Z2</accession>
<protein>
    <recommendedName>
        <fullName evidence="1">Polyribonucleotide nucleotidyltransferase</fullName>
        <ecNumber evidence="1">2.7.7.8</ecNumber>
    </recommendedName>
    <alternativeName>
        <fullName evidence="1">Polynucleotide phosphorylase</fullName>
        <shortName evidence="1">PNPase</shortName>
    </alternativeName>
</protein>
<dbReference type="EC" id="2.7.7.8" evidence="1"/>
<dbReference type="EMBL" id="AM746676">
    <property type="protein sequence ID" value="CAN94704.1"/>
    <property type="molecule type" value="Genomic_DNA"/>
</dbReference>
<dbReference type="RefSeq" id="WP_012237173.1">
    <property type="nucleotide sequence ID" value="NC_010162.1"/>
</dbReference>
<dbReference type="SMR" id="A9F8Z2"/>
<dbReference type="STRING" id="448385.sce4541"/>
<dbReference type="KEGG" id="scl:sce4541"/>
<dbReference type="eggNOG" id="COG1185">
    <property type="taxonomic scope" value="Bacteria"/>
</dbReference>
<dbReference type="HOGENOM" id="CLU_004217_2_2_7"/>
<dbReference type="OrthoDB" id="9804305at2"/>
<dbReference type="BioCyc" id="SCEL448385:SCE_RS23305-MONOMER"/>
<dbReference type="Proteomes" id="UP000002139">
    <property type="component" value="Chromosome"/>
</dbReference>
<dbReference type="GO" id="GO:0005829">
    <property type="term" value="C:cytosol"/>
    <property type="evidence" value="ECO:0007669"/>
    <property type="project" value="TreeGrafter"/>
</dbReference>
<dbReference type="GO" id="GO:0000175">
    <property type="term" value="F:3'-5'-RNA exonuclease activity"/>
    <property type="evidence" value="ECO:0007669"/>
    <property type="project" value="TreeGrafter"/>
</dbReference>
<dbReference type="GO" id="GO:0000287">
    <property type="term" value="F:magnesium ion binding"/>
    <property type="evidence" value="ECO:0007669"/>
    <property type="project" value="UniProtKB-UniRule"/>
</dbReference>
<dbReference type="GO" id="GO:0004654">
    <property type="term" value="F:polyribonucleotide nucleotidyltransferase activity"/>
    <property type="evidence" value="ECO:0007669"/>
    <property type="project" value="UniProtKB-UniRule"/>
</dbReference>
<dbReference type="GO" id="GO:0003723">
    <property type="term" value="F:RNA binding"/>
    <property type="evidence" value="ECO:0007669"/>
    <property type="project" value="UniProtKB-UniRule"/>
</dbReference>
<dbReference type="GO" id="GO:0006402">
    <property type="term" value="P:mRNA catabolic process"/>
    <property type="evidence" value="ECO:0007669"/>
    <property type="project" value="UniProtKB-UniRule"/>
</dbReference>
<dbReference type="GO" id="GO:0006396">
    <property type="term" value="P:RNA processing"/>
    <property type="evidence" value="ECO:0007669"/>
    <property type="project" value="InterPro"/>
</dbReference>
<dbReference type="CDD" id="cd02393">
    <property type="entry name" value="KH-I_PNPase"/>
    <property type="match status" value="1"/>
</dbReference>
<dbReference type="CDD" id="cd11363">
    <property type="entry name" value="RNase_PH_PNPase_1"/>
    <property type="match status" value="1"/>
</dbReference>
<dbReference type="CDD" id="cd11364">
    <property type="entry name" value="RNase_PH_PNPase_2"/>
    <property type="match status" value="1"/>
</dbReference>
<dbReference type="CDD" id="cd04472">
    <property type="entry name" value="S1_PNPase"/>
    <property type="match status" value="1"/>
</dbReference>
<dbReference type="FunFam" id="2.40.50.140:FF:000023">
    <property type="entry name" value="Polyribonucleotide nucleotidyltransferase"/>
    <property type="match status" value="1"/>
</dbReference>
<dbReference type="FunFam" id="3.30.1370.10:FF:000001">
    <property type="entry name" value="Polyribonucleotide nucleotidyltransferase"/>
    <property type="match status" value="1"/>
</dbReference>
<dbReference type="FunFam" id="3.30.230.70:FF:000001">
    <property type="entry name" value="Polyribonucleotide nucleotidyltransferase"/>
    <property type="match status" value="1"/>
</dbReference>
<dbReference type="FunFam" id="3.30.230.70:FF:000002">
    <property type="entry name" value="Polyribonucleotide nucleotidyltransferase"/>
    <property type="match status" value="1"/>
</dbReference>
<dbReference type="Gene3D" id="3.30.230.70">
    <property type="entry name" value="GHMP Kinase, N-terminal domain"/>
    <property type="match status" value="2"/>
</dbReference>
<dbReference type="Gene3D" id="3.30.1370.10">
    <property type="entry name" value="K Homology domain, type 1"/>
    <property type="match status" value="1"/>
</dbReference>
<dbReference type="Gene3D" id="2.40.50.140">
    <property type="entry name" value="Nucleic acid-binding proteins"/>
    <property type="match status" value="1"/>
</dbReference>
<dbReference type="HAMAP" id="MF_01595">
    <property type="entry name" value="PNPase"/>
    <property type="match status" value="1"/>
</dbReference>
<dbReference type="InterPro" id="IPR001247">
    <property type="entry name" value="ExoRNase_PH_dom1"/>
</dbReference>
<dbReference type="InterPro" id="IPR015847">
    <property type="entry name" value="ExoRNase_PH_dom2"/>
</dbReference>
<dbReference type="InterPro" id="IPR036345">
    <property type="entry name" value="ExoRNase_PH_dom2_sf"/>
</dbReference>
<dbReference type="InterPro" id="IPR004087">
    <property type="entry name" value="KH_dom"/>
</dbReference>
<dbReference type="InterPro" id="IPR004088">
    <property type="entry name" value="KH_dom_type_1"/>
</dbReference>
<dbReference type="InterPro" id="IPR036612">
    <property type="entry name" value="KH_dom_type_1_sf"/>
</dbReference>
<dbReference type="InterPro" id="IPR012340">
    <property type="entry name" value="NA-bd_OB-fold"/>
</dbReference>
<dbReference type="InterPro" id="IPR012162">
    <property type="entry name" value="PNPase"/>
</dbReference>
<dbReference type="InterPro" id="IPR027408">
    <property type="entry name" value="PNPase/RNase_PH_dom_sf"/>
</dbReference>
<dbReference type="InterPro" id="IPR015848">
    <property type="entry name" value="PNPase_PH_RNA-bd_bac/org-type"/>
</dbReference>
<dbReference type="InterPro" id="IPR036456">
    <property type="entry name" value="PNPase_PH_RNA-bd_sf"/>
</dbReference>
<dbReference type="InterPro" id="IPR020568">
    <property type="entry name" value="Ribosomal_Su5_D2-typ_SF"/>
</dbReference>
<dbReference type="InterPro" id="IPR003029">
    <property type="entry name" value="S1_domain"/>
</dbReference>
<dbReference type="NCBIfam" id="TIGR03591">
    <property type="entry name" value="polynuc_phos"/>
    <property type="match status" value="1"/>
</dbReference>
<dbReference type="NCBIfam" id="NF008805">
    <property type="entry name" value="PRK11824.1"/>
    <property type="match status" value="1"/>
</dbReference>
<dbReference type="PANTHER" id="PTHR11252">
    <property type="entry name" value="POLYRIBONUCLEOTIDE NUCLEOTIDYLTRANSFERASE"/>
    <property type="match status" value="1"/>
</dbReference>
<dbReference type="PANTHER" id="PTHR11252:SF0">
    <property type="entry name" value="POLYRIBONUCLEOTIDE NUCLEOTIDYLTRANSFERASE 1, MITOCHONDRIAL"/>
    <property type="match status" value="1"/>
</dbReference>
<dbReference type="Pfam" id="PF00013">
    <property type="entry name" value="KH_1"/>
    <property type="match status" value="1"/>
</dbReference>
<dbReference type="Pfam" id="PF03726">
    <property type="entry name" value="PNPase"/>
    <property type="match status" value="1"/>
</dbReference>
<dbReference type="Pfam" id="PF01138">
    <property type="entry name" value="RNase_PH"/>
    <property type="match status" value="2"/>
</dbReference>
<dbReference type="Pfam" id="PF03725">
    <property type="entry name" value="RNase_PH_C"/>
    <property type="match status" value="2"/>
</dbReference>
<dbReference type="Pfam" id="PF00575">
    <property type="entry name" value="S1"/>
    <property type="match status" value="1"/>
</dbReference>
<dbReference type="PIRSF" id="PIRSF005499">
    <property type="entry name" value="PNPase"/>
    <property type="match status" value="1"/>
</dbReference>
<dbReference type="SMART" id="SM00322">
    <property type="entry name" value="KH"/>
    <property type="match status" value="1"/>
</dbReference>
<dbReference type="SMART" id="SM00316">
    <property type="entry name" value="S1"/>
    <property type="match status" value="1"/>
</dbReference>
<dbReference type="SUPFAM" id="SSF54791">
    <property type="entry name" value="Eukaryotic type KH-domain (KH-domain type I)"/>
    <property type="match status" value="1"/>
</dbReference>
<dbReference type="SUPFAM" id="SSF50249">
    <property type="entry name" value="Nucleic acid-binding proteins"/>
    <property type="match status" value="1"/>
</dbReference>
<dbReference type="SUPFAM" id="SSF46915">
    <property type="entry name" value="Polynucleotide phosphorylase/guanosine pentaphosphate synthase (PNPase/GPSI), domain 3"/>
    <property type="match status" value="1"/>
</dbReference>
<dbReference type="SUPFAM" id="SSF55666">
    <property type="entry name" value="Ribonuclease PH domain 2-like"/>
    <property type="match status" value="2"/>
</dbReference>
<dbReference type="SUPFAM" id="SSF54211">
    <property type="entry name" value="Ribosomal protein S5 domain 2-like"/>
    <property type="match status" value="2"/>
</dbReference>
<dbReference type="PROSITE" id="PS50084">
    <property type="entry name" value="KH_TYPE_1"/>
    <property type="match status" value="1"/>
</dbReference>
<dbReference type="PROSITE" id="PS50126">
    <property type="entry name" value="S1"/>
    <property type="match status" value="1"/>
</dbReference>
<feature type="chain" id="PRO_0000329858" description="Polyribonucleotide nucleotidyltransferase">
    <location>
        <begin position="1"/>
        <end position="757"/>
    </location>
</feature>
<feature type="domain" description="KH" evidence="1">
    <location>
        <begin position="554"/>
        <end position="613"/>
    </location>
</feature>
<feature type="domain" description="S1 motif" evidence="1">
    <location>
        <begin position="623"/>
        <end position="691"/>
    </location>
</feature>
<feature type="region of interest" description="Disordered" evidence="2">
    <location>
        <begin position="697"/>
        <end position="757"/>
    </location>
</feature>
<feature type="compositionally biased region" description="Basic and acidic residues" evidence="2">
    <location>
        <begin position="702"/>
        <end position="711"/>
    </location>
</feature>
<feature type="compositionally biased region" description="Basic and acidic residues" evidence="2">
    <location>
        <begin position="719"/>
        <end position="757"/>
    </location>
</feature>
<feature type="binding site" evidence="1">
    <location>
        <position position="487"/>
    </location>
    <ligand>
        <name>Mg(2+)</name>
        <dbReference type="ChEBI" id="CHEBI:18420"/>
    </ligand>
</feature>
<feature type="binding site" evidence="1">
    <location>
        <position position="493"/>
    </location>
    <ligand>
        <name>Mg(2+)</name>
        <dbReference type="ChEBI" id="CHEBI:18420"/>
    </ligand>
</feature>
<sequence length="757" mass="82451">MFVRESVMVGGRALTLETGRLAKQAHGAVLVTYGDTMVLVTAVSQDERPGLDFFPLTCEFVEKTYAAGKIPGGFFKREARQREEEILSSRLMDRPLRPLFPEGFKRDTQIIATVLSSDKQNKADVLALTGASAALHISDIPWHGPVVGVRVGRLDGEFVAYPTVADIERCDIDLVVACSRDAIVMVEGGAAEATEAEIIDALMFAHETAQPVIDLIEKMRAAVGKPKREFVAPALPDEIKRRVAQIVDEDLKAATKVTDKKARYDGYSSLKKKLTETLSAELGAEKLLPLQGLVKAEFEERKAHVVRTYVTEEGRRIDGRDGRSIRPIMCEVGLLPRVHGSALFQRGETQAIVTTTLGTSTDEQKIDGLMGETWKRFYLHYNFPPFSTGETKPLRGPGRREIGHGALAERALSRMIPAPDQFPYTIRIVSETLESNGSSSMAAVCGGCLSLMDAGVPIKSPVAGIAMGLIMEGNKYAVLSDILGDEDHLGDMDFKVCGTARGVTAIQMDIKIAGLSRQILAQALDQAREGRLHILGKMLETLPTTRPELSQYAPRITTVRVKPDQIRLIIGPGGKTIKGIVDQTGVAIDVEDDGTVNVASADSDAVKRALDIIKGLTAEPEVGATYKGTVKRITDFGAFVEILPNTDGLLHISEMAHTRVERVEDVVKEGDSLDVKVLSVDREGKIRLSRRELLPLPEGEEGDRARERMAQARDAGPPPRRDGPGGRGGDRGGDRGSRPGLDRDRGGPPRERRERRS</sequence>